<comment type="function">
    <text evidence="1">Involved in iron-sulfur cluster biogenesis. Binds a 4Fe-4S cluster, can transfer this cluster to apoproteins, and thereby intervenes in the maturation of Fe/S proteins. Could also act as a scaffold/chaperone for damaged Fe/S proteins.</text>
</comment>
<comment type="cofactor">
    <cofactor evidence="1">
        <name>[4Fe-4S] cluster</name>
        <dbReference type="ChEBI" id="CHEBI:49883"/>
    </cofactor>
    <text evidence="1">Binds 1 [4Fe-4S] cluster per subunit. The cluster is presumably bound at the interface of two monomers.</text>
</comment>
<comment type="subunit">
    <text evidence="1">Homodimer.</text>
</comment>
<comment type="similarity">
    <text evidence="1">Belongs to the NfuA family.</text>
</comment>
<sequence length="194" mass="21001">MSMITITESAQQHFGKLLAQQPEGTNIRVFVVNPGTQNAECGVSYCPPEAVEASDTKIELELFDAYLDELSLPFLDDAEIDFVTDKMGSQLTLKAPNAKVRKVSDDATLMERVDYAIQTQVNPQLAGHGGNVSLAEITEDGVAILQFGGGCNGCSMVDVTLKEGIEKELLAQFAGELTGVRDVTEHARGEHSYY</sequence>
<organism>
    <name type="scientific">Photobacterium profundum (strain SS9)</name>
    <dbReference type="NCBI Taxonomy" id="298386"/>
    <lineage>
        <taxon>Bacteria</taxon>
        <taxon>Pseudomonadati</taxon>
        <taxon>Pseudomonadota</taxon>
        <taxon>Gammaproteobacteria</taxon>
        <taxon>Vibrionales</taxon>
        <taxon>Vibrionaceae</taxon>
        <taxon>Photobacterium</taxon>
    </lineage>
</organism>
<feature type="chain" id="PRO_0000209480" description="Fe/S biogenesis protein NfuA">
    <location>
        <begin position="1"/>
        <end position="194"/>
    </location>
</feature>
<feature type="binding site" evidence="1">
    <location>
        <position position="151"/>
    </location>
    <ligand>
        <name>[4Fe-4S] cluster</name>
        <dbReference type="ChEBI" id="CHEBI:49883"/>
    </ligand>
</feature>
<feature type="binding site" evidence="1">
    <location>
        <position position="154"/>
    </location>
    <ligand>
        <name>[4Fe-4S] cluster</name>
        <dbReference type="ChEBI" id="CHEBI:49883"/>
    </ligand>
</feature>
<dbReference type="EMBL" id="CR378663">
    <property type="protein sequence ID" value="CAG18616.1"/>
    <property type="molecule type" value="Genomic_DNA"/>
</dbReference>
<dbReference type="SMR" id="Q6LVQ9"/>
<dbReference type="STRING" id="298386.PBPRA0177"/>
<dbReference type="KEGG" id="ppr:PBPRA0177"/>
<dbReference type="eggNOG" id="COG0316">
    <property type="taxonomic scope" value="Bacteria"/>
</dbReference>
<dbReference type="eggNOG" id="COG0694">
    <property type="taxonomic scope" value="Bacteria"/>
</dbReference>
<dbReference type="HOGENOM" id="CLU_094569_0_0_6"/>
<dbReference type="Proteomes" id="UP000000593">
    <property type="component" value="Chromosome 1"/>
</dbReference>
<dbReference type="GO" id="GO:0051539">
    <property type="term" value="F:4 iron, 4 sulfur cluster binding"/>
    <property type="evidence" value="ECO:0007669"/>
    <property type="project" value="UniProtKB-UniRule"/>
</dbReference>
<dbReference type="GO" id="GO:0005506">
    <property type="term" value="F:iron ion binding"/>
    <property type="evidence" value="ECO:0007669"/>
    <property type="project" value="InterPro"/>
</dbReference>
<dbReference type="GO" id="GO:0016226">
    <property type="term" value="P:iron-sulfur cluster assembly"/>
    <property type="evidence" value="ECO:0007669"/>
    <property type="project" value="UniProtKB-UniRule"/>
</dbReference>
<dbReference type="GO" id="GO:0051604">
    <property type="term" value="P:protein maturation"/>
    <property type="evidence" value="ECO:0007669"/>
    <property type="project" value="UniProtKB-UniRule"/>
</dbReference>
<dbReference type="Gene3D" id="3.30.300.130">
    <property type="entry name" value="Fe-S cluster assembly (FSCA)"/>
    <property type="match status" value="1"/>
</dbReference>
<dbReference type="Gene3D" id="2.60.300.12">
    <property type="entry name" value="HesB-like domain"/>
    <property type="match status" value="1"/>
</dbReference>
<dbReference type="HAMAP" id="MF_01637">
    <property type="entry name" value="Fe_S_biogen_NfuA"/>
    <property type="match status" value="1"/>
</dbReference>
<dbReference type="InterPro" id="IPR017726">
    <property type="entry name" value="Fe/S_biogenesis_protein_NfuA"/>
</dbReference>
<dbReference type="InterPro" id="IPR000361">
    <property type="entry name" value="FeS_biogenesis"/>
</dbReference>
<dbReference type="InterPro" id="IPR034904">
    <property type="entry name" value="FSCA_dom_sf"/>
</dbReference>
<dbReference type="InterPro" id="IPR035903">
    <property type="entry name" value="HesB-like_dom_sf"/>
</dbReference>
<dbReference type="InterPro" id="IPR001075">
    <property type="entry name" value="NIF_FeS_clus_asmbl_NifU_C"/>
</dbReference>
<dbReference type="NCBIfam" id="NF008392">
    <property type="entry name" value="PRK11190.1"/>
    <property type="match status" value="1"/>
</dbReference>
<dbReference type="NCBIfam" id="TIGR03341">
    <property type="entry name" value="YhgI_GntY"/>
    <property type="match status" value="1"/>
</dbReference>
<dbReference type="PANTHER" id="PTHR11178:SF51">
    <property type="entry name" value="FE_S BIOGENESIS PROTEIN NFUA"/>
    <property type="match status" value="1"/>
</dbReference>
<dbReference type="PANTHER" id="PTHR11178">
    <property type="entry name" value="IRON-SULFUR CLUSTER SCAFFOLD PROTEIN NFU-RELATED"/>
    <property type="match status" value="1"/>
</dbReference>
<dbReference type="Pfam" id="PF01521">
    <property type="entry name" value="Fe-S_biosyn"/>
    <property type="match status" value="1"/>
</dbReference>
<dbReference type="Pfam" id="PF01106">
    <property type="entry name" value="NifU"/>
    <property type="match status" value="1"/>
</dbReference>
<dbReference type="SUPFAM" id="SSF117916">
    <property type="entry name" value="Fe-S cluster assembly (FSCA) domain-like"/>
    <property type="match status" value="1"/>
</dbReference>
<dbReference type="SUPFAM" id="SSF89360">
    <property type="entry name" value="HesB-like domain"/>
    <property type="match status" value="1"/>
</dbReference>
<name>NFUA_PHOPR</name>
<accession>Q6LVQ9</accession>
<protein>
    <recommendedName>
        <fullName evidence="1">Fe/S biogenesis protein NfuA</fullName>
    </recommendedName>
</protein>
<gene>
    <name evidence="1" type="primary">nfuA</name>
    <name type="ordered locus">PBPRA0177</name>
</gene>
<evidence type="ECO:0000255" key="1">
    <source>
        <dbReference type="HAMAP-Rule" id="MF_01637"/>
    </source>
</evidence>
<reference key="1">
    <citation type="journal article" date="2005" name="Science">
        <title>Life at depth: Photobacterium profundum genome sequence and expression analysis.</title>
        <authorList>
            <person name="Vezzi A."/>
            <person name="Campanaro S."/>
            <person name="D'Angelo M."/>
            <person name="Simonato F."/>
            <person name="Vitulo N."/>
            <person name="Lauro F.M."/>
            <person name="Cestaro A."/>
            <person name="Malacrida G."/>
            <person name="Simionati B."/>
            <person name="Cannata N."/>
            <person name="Romualdi C."/>
            <person name="Bartlett D.H."/>
            <person name="Valle G."/>
        </authorList>
    </citation>
    <scope>NUCLEOTIDE SEQUENCE [LARGE SCALE GENOMIC DNA]</scope>
    <source>
        <strain>ATCC BAA-1253 / SS9</strain>
    </source>
</reference>
<keyword id="KW-0004">4Fe-4S</keyword>
<keyword id="KW-0408">Iron</keyword>
<keyword id="KW-0411">Iron-sulfur</keyword>
<keyword id="KW-0479">Metal-binding</keyword>
<keyword id="KW-1185">Reference proteome</keyword>
<proteinExistence type="inferred from homology"/>